<dbReference type="EC" id="2.7.1.36" evidence="10"/>
<dbReference type="EMBL" id="AAHF01000005">
    <property type="protein sequence ID" value="EAL90009.1"/>
    <property type="molecule type" value="Genomic_DNA"/>
</dbReference>
<dbReference type="RefSeq" id="XP_752047.1">
    <property type="nucleotide sequence ID" value="XM_746954.1"/>
</dbReference>
<dbReference type="SMR" id="Q4WP25"/>
<dbReference type="FunCoup" id="Q4WP25">
    <property type="interactions" value="449"/>
</dbReference>
<dbReference type="STRING" id="330879.Q4WP25"/>
<dbReference type="EnsemblFungi" id="EAL90009">
    <property type="protein sequence ID" value="EAL90009"/>
    <property type="gene ID" value="AFUA_4G07780"/>
</dbReference>
<dbReference type="GeneID" id="3509635"/>
<dbReference type="KEGG" id="afm:AFUA_4G07780"/>
<dbReference type="VEuPathDB" id="FungiDB:Afu4g07780"/>
<dbReference type="eggNOG" id="KOG1511">
    <property type="taxonomic scope" value="Eukaryota"/>
</dbReference>
<dbReference type="HOGENOM" id="CLU_017814_1_1_1"/>
<dbReference type="InParanoid" id="Q4WP25"/>
<dbReference type="OMA" id="LMDFNHG"/>
<dbReference type="OrthoDB" id="1652964at2759"/>
<dbReference type="UniPathway" id="UPA00057">
    <property type="reaction ID" value="UER00098"/>
</dbReference>
<dbReference type="PHI-base" id="PHI:2542"/>
<dbReference type="Proteomes" id="UP000002530">
    <property type="component" value="Chromosome 4"/>
</dbReference>
<dbReference type="GO" id="GO:0005829">
    <property type="term" value="C:cytosol"/>
    <property type="evidence" value="ECO:0000318"/>
    <property type="project" value="GO_Central"/>
</dbReference>
<dbReference type="GO" id="GO:0005524">
    <property type="term" value="F:ATP binding"/>
    <property type="evidence" value="ECO:0007669"/>
    <property type="project" value="UniProtKB-KW"/>
</dbReference>
<dbReference type="GO" id="GO:0046872">
    <property type="term" value="F:metal ion binding"/>
    <property type="evidence" value="ECO:0007669"/>
    <property type="project" value="UniProtKB-KW"/>
</dbReference>
<dbReference type="GO" id="GO:0004496">
    <property type="term" value="F:mevalonate kinase activity"/>
    <property type="evidence" value="ECO:0000318"/>
    <property type="project" value="GO_Central"/>
</dbReference>
<dbReference type="GO" id="GO:0006696">
    <property type="term" value="P:ergosterol biosynthetic process"/>
    <property type="evidence" value="ECO:0000318"/>
    <property type="project" value="GO_Central"/>
</dbReference>
<dbReference type="GO" id="GO:0019287">
    <property type="term" value="P:isopentenyl diphosphate biosynthetic process, mevalonate pathway"/>
    <property type="evidence" value="ECO:0000318"/>
    <property type="project" value="GO_Central"/>
</dbReference>
<dbReference type="FunFam" id="3.30.230.10:FF:000027">
    <property type="entry name" value="Mevalonate kinase"/>
    <property type="match status" value="1"/>
</dbReference>
<dbReference type="FunFam" id="3.30.70.890:FF:000003">
    <property type="entry name" value="Mevalonate kinase"/>
    <property type="match status" value="1"/>
</dbReference>
<dbReference type="Gene3D" id="3.30.230.10">
    <property type="match status" value="1"/>
</dbReference>
<dbReference type="Gene3D" id="3.30.70.890">
    <property type="entry name" value="GHMP kinase, C-terminal domain"/>
    <property type="match status" value="1"/>
</dbReference>
<dbReference type="InterPro" id="IPR013750">
    <property type="entry name" value="GHMP_kinase_C_dom"/>
</dbReference>
<dbReference type="InterPro" id="IPR036554">
    <property type="entry name" value="GHMP_kinase_C_sf"/>
</dbReference>
<dbReference type="InterPro" id="IPR006204">
    <property type="entry name" value="GHMP_kinase_N_dom"/>
</dbReference>
<dbReference type="InterPro" id="IPR006203">
    <property type="entry name" value="GHMP_knse_ATP-bd_CS"/>
</dbReference>
<dbReference type="InterPro" id="IPR006205">
    <property type="entry name" value="Mev_gal_kin"/>
</dbReference>
<dbReference type="InterPro" id="IPR020568">
    <property type="entry name" value="Ribosomal_Su5_D2-typ_SF"/>
</dbReference>
<dbReference type="InterPro" id="IPR014721">
    <property type="entry name" value="Ribsml_uS5_D2-typ_fold_subgr"/>
</dbReference>
<dbReference type="NCBIfam" id="TIGR00549">
    <property type="entry name" value="mevalon_kin"/>
    <property type="match status" value="1"/>
</dbReference>
<dbReference type="PANTHER" id="PTHR43290">
    <property type="entry name" value="MEVALONATE KINASE"/>
    <property type="match status" value="1"/>
</dbReference>
<dbReference type="PANTHER" id="PTHR43290:SF2">
    <property type="entry name" value="MEVALONATE KINASE"/>
    <property type="match status" value="1"/>
</dbReference>
<dbReference type="Pfam" id="PF08544">
    <property type="entry name" value="GHMP_kinases_C"/>
    <property type="match status" value="1"/>
</dbReference>
<dbReference type="Pfam" id="PF00288">
    <property type="entry name" value="GHMP_kinases_N"/>
    <property type="match status" value="1"/>
</dbReference>
<dbReference type="PRINTS" id="PR00959">
    <property type="entry name" value="MEVGALKINASE"/>
</dbReference>
<dbReference type="SUPFAM" id="SSF55060">
    <property type="entry name" value="GHMP Kinase, C-terminal domain"/>
    <property type="match status" value="1"/>
</dbReference>
<dbReference type="SUPFAM" id="SSF54211">
    <property type="entry name" value="Ribosomal protein S5 domain 2-like"/>
    <property type="match status" value="1"/>
</dbReference>
<dbReference type="PROSITE" id="PS00627">
    <property type="entry name" value="GHMP_KINASES_ATP"/>
    <property type="match status" value="1"/>
</dbReference>
<accession>Q4WP25</accession>
<proteinExistence type="evidence at transcript level"/>
<name>ERG12_ASPFU</name>
<sequence length="538" mass="58457">MGNPRGRRTNGSIKTSKGTQRGTVSNLLSDQPLAARPKVSIVSNDDSQDSSDGGAFTTPSTTESTLKTTINGTDSTERNMSRKPSSPMAPAFMVSAPGKVIVYGEHAVVHGKAAMAAAISLRSYLLVTTLSKSQRTITMNFRDIGLDHTWNIDELPWDVFHHPSKKKFYYDLVTSLDPELVAAIQPHADAVSPDKPEDVRKIHRRSASAFLYLFLSLGSSQNPGAIYTLRSTIPIGAGLGSSASVCVCLSAALLLQIRTLAGPHPDQPPDEAEVQIERINRWAFVGEMCTHGNPSGVDNTVSAGGKAVVFRREDYSKPPTVTPLLNFPELPLLLVDTRQSRSTAVEVAKVGKLKDEYPVVTDSILEAIDQVTLAAQQKIQEISTNGISYRTLEDLGTLIRINHGFLVSLGVSHPRLERIRELVDYADIGWTKLTGAGGGGCAITLLRPDIKEEAVRELEEKLSAEGFVKYETTLGGDGIGVLWPAVLRNGTDEEGGEEIDQQKFENAVGTEGIERLVGVGVQEKREGWKFWKRSPRFS</sequence>
<feature type="chain" id="PRO_0000454152" description="Mevalonate kinase erg12">
    <location>
        <begin position="1"/>
        <end position="538"/>
    </location>
</feature>
<feature type="region of interest" description="Disordered" evidence="4">
    <location>
        <begin position="1"/>
        <end position="87"/>
    </location>
</feature>
<feature type="compositionally biased region" description="Polar residues" evidence="4">
    <location>
        <begin position="9"/>
        <end position="29"/>
    </location>
</feature>
<feature type="compositionally biased region" description="Low complexity" evidence="4">
    <location>
        <begin position="57"/>
        <end position="69"/>
    </location>
</feature>
<feature type="active site" description="Proton acceptor" evidence="3">
    <location>
        <position position="298"/>
    </location>
</feature>
<feature type="binding site" evidence="2">
    <location>
        <position position="99"/>
    </location>
    <ligand>
        <name>ATP</name>
        <dbReference type="ChEBI" id="CHEBI:30616"/>
    </ligand>
</feature>
<feature type="binding site" evidence="2">
    <location>
        <position position="231"/>
    </location>
    <ligand>
        <name>ATP</name>
        <dbReference type="ChEBI" id="CHEBI:30616"/>
    </ligand>
</feature>
<feature type="binding site" evidence="2">
    <location>
        <begin position="236"/>
        <end position="242"/>
    </location>
    <ligand>
        <name>ATP</name>
        <dbReference type="ChEBI" id="CHEBI:30616"/>
    </ligand>
</feature>
<feature type="binding site" evidence="2">
    <location>
        <position position="242"/>
    </location>
    <ligand>
        <name>Mg(2+)</name>
        <dbReference type="ChEBI" id="CHEBI:18420"/>
    </ligand>
</feature>
<feature type="binding site" evidence="2">
    <location>
        <position position="287"/>
    </location>
    <ligand>
        <name>Mg(2+)</name>
        <dbReference type="ChEBI" id="CHEBI:18420"/>
    </ligand>
</feature>
<reference key="1">
    <citation type="journal article" date="2005" name="Nature">
        <title>Genomic sequence of the pathogenic and allergenic filamentous fungus Aspergillus fumigatus.</title>
        <authorList>
            <person name="Nierman W.C."/>
            <person name="Pain A."/>
            <person name="Anderson M.J."/>
            <person name="Wortman J.R."/>
            <person name="Kim H.S."/>
            <person name="Arroyo J."/>
            <person name="Berriman M."/>
            <person name="Abe K."/>
            <person name="Archer D.B."/>
            <person name="Bermejo C."/>
            <person name="Bennett J.W."/>
            <person name="Bowyer P."/>
            <person name="Chen D."/>
            <person name="Collins M."/>
            <person name="Coulsen R."/>
            <person name="Davies R."/>
            <person name="Dyer P.S."/>
            <person name="Farman M.L."/>
            <person name="Fedorova N."/>
            <person name="Fedorova N.D."/>
            <person name="Feldblyum T.V."/>
            <person name="Fischer R."/>
            <person name="Fosker N."/>
            <person name="Fraser A."/>
            <person name="Garcia J.L."/>
            <person name="Garcia M.J."/>
            <person name="Goble A."/>
            <person name="Goldman G.H."/>
            <person name="Gomi K."/>
            <person name="Griffith-Jones S."/>
            <person name="Gwilliam R."/>
            <person name="Haas B.J."/>
            <person name="Haas H."/>
            <person name="Harris D.E."/>
            <person name="Horiuchi H."/>
            <person name="Huang J."/>
            <person name="Humphray S."/>
            <person name="Jimenez J."/>
            <person name="Keller N."/>
            <person name="Khouri H."/>
            <person name="Kitamoto K."/>
            <person name="Kobayashi T."/>
            <person name="Konzack S."/>
            <person name="Kulkarni R."/>
            <person name="Kumagai T."/>
            <person name="Lafton A."/>
            <person name="Latge J.-P."/>
            <person name="Li W."/>
            <person name="Lord A."/>
            <person name="Lu C."/>
            <person name="Majoros W.H."/>
            <person name="May G.S."/>
            <person name="Miller B.L."/>
            <person name="Mohamoud Y."/>
            <person name="Molina M."/>
            <person name="Monod M."/>
            <person name="Mouyna I."/>
            <person name="Mulligan S."/>
            <person name="Murphy L.D."/>
            <person name="O'Neil S."/>
            <person name="Paulsen I."/>
            <person name="Penalva M.A."/>
            <person name="Pertea M."/>
            <person name="Price C."/>
            <person name="Pritchard B.L."/>
            <person name="Quail M.A."/>
            <person name="Rabbinowitsch E."/>
            <person name="Rawlins N."/>
            <person name="Rajandream M.A."/>
            <person name="Reichard U."/>
            <person name="Renauld H."/>
            <person name="Robson G.D."/>
            <person name="Rodriguez de Cordoba S."/>
            <person name="Rodriguez-Pena J.M."/>
            <person name="Ronning C.M."/>
            <person name="Rutter S."/>
            <person name="Salzberg S.L."/>
            <person name="Sanchez M."/>
            <person name="Sanchez-Ferrero J.C."/>
            <person name="Saunders D."/>
            <person name="Seeger K."/>
            <person name="Squares R."/>
            <person name="Squares S."/>
            <person name="Takeuchi M."/>
            <person name="Tekaia F."/>
            <person name="Turner G."/>
            <person name="Vazquez de Aldana C.R."/>
            <person name="Weidman J."/>
            <person name="White O."/>
            <person name="Woodward J.R."/>
            <person name="Yu J.-H."/>
            <person name="Fraser C.M."/>
            <person name="Galagan J.E."/>
            <person name="Asai K."/>
            <person name="Machida M."/>
            <person name="Hall N."/>
            <person name="Barrell B.G."/>
            <person name="Denning D.W."/>
        </authorList>
    </citation>
    <scope>NUCLEOTIDE SEQUENCE [LARGE SCALE GENOMIC DNA]</scope>
    <source>
        <strain>ATCC MYA-4609 / CBS 101355 / FGSC A1100 / Af293</strain>
    </source>
</reference>
<reference key="2">
    <citation type="journal article" date="2005" name="Med. Mycol.">
        <title>The ergosterol biosynthesis pathway, transporter genes, and azole resistance in Aspergillus fumigatus.</title>
        <authorList>
            <person name="Ferreira M.E."/>
            <person name="Colombo A.L."/>
            <person name="Paulsen I."/>
            <person name="Ren Q."/>
            <person name="Wortman J."/>
            <person name="Huang J."/>
            <person name="Goldman M.H."/>
            <person name="Goldman G.H."/>
        </authorList>
    </citation>
    <scope>IDENTIFICATION</scope>
    <scope>FUNCTION</scope>
</reference>
<reference key="3">
    <citation type="journal article" date="2012" name="Proc. Natl. Acad. Sci. U.S.A.">
        <title>Mevalonate governs interdependency of ergosterol and siderophore biosyntheses in the fungal pathogen Aspergillus fumigatus.</title>
        <authorList>
            <person name="Yasmin S."/>
            <person name="Alcazar-Fuoli L."/>
            <person name="Gruendlinger M."/>
            <person name="Puempel T."/>
            <person name="Cairns T."/>
            <person name="Blatzer M."/>
            <person name="Lopez J.F."/>
            <person name="Grimalt J.O."/>
            <person name="Bignell E."/>
            <person name="Haas H."/>
        </authorList>
    </citation>
    <scope>FUNCTION</scope>
    <scope>INDUCTION</scope>
</reference>
<gene>
    <name evidence="6" type="primary">erg12</name>
    <name type="ORF">AFUA_4G07780</name>
</gene>
<evidence type="ECO:0000250" key="1">
    <source>
        <dbReference type="UniProtKB" id="P07277"/>
    </source>
</evidence>
<evidence type="ECO:0000250" key="2">
    <source>
        <dbReference type="UniProtKB" id="P17256"/>
    </source>
</evidence>
<evidence type="ECO:0000250" key="3">
    <source>
        <dbReference type="UniProtKB" id="Q03426"/>
    </source>
</evidence>
<evidence type="ECO:0000256" key="4">
    <source>
        <dbReference type="SAM" id="MobiDB-lite"/>
    </source>
</evidence>
<evidence type="ECO:0000269" key="5">
    <source>
    </source>
</evidence>
<evidence type="ECO:0000303" key="6">
    <source>
    </source>
</evidence>
<evidence type="ECO:0000303" key="7">
    <source>
    </source>
</evidence>
<evidence type="ECO:0000305" key="8"/>
<evidence type="ECO:0000305" key="9">
    <source>
    </source>
</evidence>
<evidence type="ECO:0000305" key="10">
    <source>
    </source>
</evidence>
<organism>
    <name type="scientific">Aspergillus fumigatus (strain ATCC MYA-4609 / CBS 101355 / FGSC A1100 / Af293)</name>
    <name type="common">Neosartorya fumigata</name>
    <dbReference type="NCBI Taxonomy" id="330879"/>
    <lineage>
        <taxon>Eukaryota</taxon>
        <taxon>Fungi</taxon>
        <taxon>Dikarya</taxon>
        <taxon>Ascomycota</taxon>
        <taxon>Pezizomycotina</taxon>
        <taxon>Eurotiomycetes</taxon>
        <taxon>Eurotiomycetidae</taxon>
        <taxon>Eurotiales</taxon>
        <taxon>Aspergillaceae</taxon>
        <taxon>Aspergillus</taxon>
        <taxon>Aspergillus subgen. Fumigati</taxon>
    </lineage>
</organism>
<keyword id="KW-0067">ATP-binding</keyword>
<keyword id="KW-0963">Cytoplasm</keyword>
<keyword id="KW-0418">Kinase</keyword>
<keyword id="KW-0444">Lipid biosynthesis</keyword>
<keyword id="KW-0443">Lipid metabolism</keyword>
<keyword id="KW-0460">Magnesium</keyword>
<keyword id="KW-0479">Metal-binding</keyword>
<keyword id="KW-0547">Nucleotide-binding</keyword>
<keyword id="KW-1185">Reference proteome</keyword>
<keyword id="KW-0752">Steroid biosynthesis</keyword>
<keyword id="KW-0753">Steroid metabolism</keyword>
<keyword id="KW-0756">Sterol biosynthesis</keyword>
<keyword id="KW-1207">Sterol metabolism</keyword>
<keyword id="KW-0808">Transferase</keyword>
<comment type="function">
    <text evidence="1 9 10">Mevalonate kinase; part of the second module of ergosterol biosynthesis pathway that includes the middle steps of the pathway (By similarity). Erg12 converts mevalonate into 5-phosphomevalonate (By similarity). The second module is carried out in the vacuole and involves the formation of farnesyl diphosphate, which is also an important intermediate in the biosynthesis of ubiquinone, dolichol, heme and prenylated proteins. Activity by the mevalonate kinase erg12 (AFUA_4G07780) first converts mevalonate into 5-phosphomevalonate. 5-phosphomevalonate is then further converted to 5-diphosphomevalonate by the phosphomevalonate kinase erg8 (AFUA_5G10680). The diphosphomevalonate decarboxylase mvd1 (AFUA_4G07130) then produces isopentenyl diphosphate. The isopentenyl-diphosphate delta-isomerase idi1 (AFUA_6G11160) then catalyzes the 1,3-allylic rearrangement of the homoallylic substrate isopentenyl (IPP) to its highly electrophilic allylic isomer, dimethylallyl diphosphate (DMAPP). Finally the farnesyl diphosphate synthase erg20 (AFUA_5G02450) catalyzes the sequential condensation of isopentenyl pyrophosphate with dimethylallyl pyrophosphate, and then with the resultant geranylpyrophosphate to the ultimate product farnesyl pyrophosphate (Probable) (PubMed:16110826, PubMed:22106303).</text>
</comment>
<comment type="catalytic activity">
    <reaction evidence="10">
        <text>(R)-mevalonate + ATP = (R)-5-phosphomevalonate + ADP + H(+)</text>
        <dbReference type="Rhea" id="RHEA:17065"/>
        <dbReference type="ChEBI" id="CHEBI:15378"/>
        <dbReference type="ChEBI" id="CHEBI:30616"/>
        <dbReference type="ChEBI" id="CHEBI:36464"/>
        <dbReference type="ChEBI" id="CHEBI:58146"/>
        <dbReference type="ChEBI" id="CHEBI:456216"/>
        <dbReference type="EC" id="2.7.1.36"/>
    </reaction>
    <physiologicalReaction direction="left-to-right" evidence="10">
        <dbReference type="Rhea" id="RHEA:17066"/>
    </physiologicalReaction>
</comment>
<comment type="cofactor">
    <cofactor evidence="2">
        <name>Mg(2+)</name>
        <dbReference type="ChEBI" id="CHEBI:18420"/>
    </cofactor>
</comment>
<comment type="pathway">
    <text evidence="10">Isoprenoid biosynthesis; isopentenyl diphosphate biosynthesis via mevalonate pathway; isopentenyl diphosphate from (R)-mevalonate: step 1/3.</text>
</comment>
<comment type="subunit">
    <text evidence="2">Homodimer.</text>
</comment>
<comment type="subcellular location">
    <subcellularLocation>
        <location evidence="10">Cytoplasm</location>
        <location evidence="10">Cytosol</location>
    </subcellularLocation>
</comment>
<comment type="induction">
    <text evidence="5">Expression is down-regulated during iron starvation.</text>
</comment>
<comment type="similarity">
    <text evidence="8">Belongs to the GHMP kinase family. Mevalonate kinase subfamily.</text>
</comment>
<protein>
    <recommendedName>
        <fullName evidence="7">Mevalonate kinase erg12</fullName>
        <shortName evidence="8">MK</shortName>
        <shortName evidence="8">MvK</shortName>
        <ecNumber evidence="10">2.7.1.36</ecNumber>
    </recommendedName>
    <alternativeName>
        <fullName evidence="6">Ergosterol biosynthesis protein 12</fullName>
    </alternativeName>
</protein>